<dbReference type="EC" id="2.4.99.28" evidence="1"/>
<dbReference type="EMBL" id="CP000783">
    <property type="protein sequence ID" value="ABU78811.1"/>
    <property type="molecule type" value="Genomic_DNA"/>
</dbReference>
<dbReference type="RefSeq" id="WP_012125970.1">
    <property type="nucleotide sequence ID" value="NC_009778.1"/>
</dbReference>
<dbReference type="SMR" id="A7MJD8"/>
<dbReference type="CAZy" id="GT51">
    <property type="family name" value="Glycosyltransferase Family 51"/>
</dbReference>
<dbReference type="KEGG" id="esa:ESA_03600"/>
<dbReference type="PATRIC" id="fig|290339.8.peg.3206"/>
<dbReference type="HOGENOM" id="CLU_006354_1_1_6"/>
<dbReference type="UniPathway" id="UPA00219"/>
<dbReference type="Proteomes" id="UP000000260">
    <property type="component" value="Chromosome"/>
</dbReference>
<dbReference type="GO" id="GO:0009274">
    <property type="term" value="C:peptidoglycan-based cell wall"/>
    <property type="evidence" value="ECO:0007669"/>
    <property type="project" value="InterPro"/>
</dbReference>
<dbReference type="GO" id="GO:0005886">
    <property type="term" value="C:plasma membrane"/>
    <property type="evidence" value="ECO:0007669"/>
    <property type="project" value="UniProtKB-SubCell"/>
</dbReference>
<dbReference type="GO" id="GO:0016763">
    <property type="term" value="F:pentosyltransferase activity"/>
    <property type="evidence" value="ECO:0007669"/>
    <property type="project" value="InterPro"/>
</dbReference>
<dbReference type="GO" id="GO:0008955">
    <property type="term" value="F:peptidoglycan glycosyltransferase activity"/>
    <property type="evidence" value="ECO:0007669"/>
    <property type="project" value="UniProtKB-UniRule"/>
</dbReference>
<dbReference type="GO" id="GO:0071555">
    <property type="term" value="P:cell wall organization"/>
    <property type="evidence" value="ECO:0007669"/>
    <property type="project" value="UniProtKB-KW"/>
</dbReference>
<dbReference type="GO" id="GO:0009252">
    <property type="term" value="P:peptidoglycan biosynthetic process"/>
    <property type="evidence" value="ECO:0007669"/>
    <property type="project" value="UniProtKB-UniRule"/>
</dbReference>
<dbReference type="GO" id="GO:0008360">
    <property type="term" value="P:regulation of cell shape"/>
    <property type="evidence" value="ECO:0007669"/>
    <property type="project" value="UniProtKB-KW"/>
</dbReference>
<dbReference type="Gene3D" id="1.10.3810.10">
    <property type="entry name" value="Biosynthetic peptidoglycan transglycosylase-like"/>
    <property type="match status" value="1"/>
</dbReference>
<dbReference type="HAMAP" id="MF_00766">
    <property type="entry name" value="PGT_MtgA"/>
    <property type="match status" value="1"/>
</dbReference>
<dbReference type="InterPro" id="IPR001264">
    <property type="entry name" value="Glyco_trans_51"/>
</dbReference>
<dbReference type="InterPro" id="IPR023346">
    <property type="entry name" value="Lysozyme-like_dom_sf"/>
</dbReference>
<dbReference type="InterPro" id="IPR036950">
    <property type="entry name" value="PBP_transglycosylase"/>
</dbReference>
<dbReference type="InterPro" id="IPR011812">
    <property type="entry name" value="Pep_trsgly"/>
</dbReference>
<dbReference type="NCBIfam" id="TIGR02070">
    <property type="entry name" value="mono_pep_trsgly"/>
    <property type="match status" value="1"/>
</dbReference>
<dbReference type="PANTHER" id="PTHR30400:SF0">
    <property type="entry name" value="BIOSYNTHETIC PEPTIDOGLYCAN TRANSGLYCOSYLASE"/>
    <property type="match status" value="1"/>
</dbReference>
<dbReference type="PANTHER" id="PTHR30400">
    <property type="entry name" value="MONOFUNCTIONAL BIOSYNTHETIC PEPTIDOGLYCAN TRANSGLYCOSYLASE"/>
    <property type="match status" value="1"/>
</dbReference>
<dbReference type="Pfam" id="PF00912">
    <property type="entry name" value="Transgly"/>
    <property type="match status" value="1"/>
</dbReference>
<dbReference type="SUPFAM" id="SSF53955">
    <property type="entry name" value="Lysozyme-like"/>
    <property type="match status" value="1"/>
</dbReference>
<gene>
    <name evidence="1" type="primary">mtgA</name>
    <name type="ordered locus">ESA_03600</name>
</gene>
<name>MTGA_CROS8</name>
<organism>
    <name type="scientific">Cronobacter sakazakii (strain ATCC BAA-894)</name>
    <name type="common">Enterobacter sakazakii</name>
    <dbReference type="NCBI Taxonomy" id="290339"/>
    <lineage>
        <taxon>Bacteria</taxon>
        <taxon>Pseudomonadati</taxon>
        <taxon>Pseudomonadota</taxon>
        <taxon>Gammaproteobacteria</taxon>
        <taxon>Enterobacterales</taxon>
        <taxon>Enterobacteriaceae</taxon>
        <taxon>Cronobacter</taxon>
    </lineage>
</organism>
<sequence length="241" mass="27072">MSKTRGSLFVRLRRLALRAILAVLGVWIAGILLFSVMPVPFSAVMVERQFSAWFSGDFRYVAHSDWVSMDEISPWMGLAVIAAEDQTFPEHWGFDVAAIQKAVAHNENSRRIRGASTLSQQTAKNLFLWDGRSWVRKGLEAGLTLGIETVWSKRRILTVYLNIAEFGDGVFGVEEASQRYFNKPASRLSASEAALLAAVLPNPLRYKASAPSGYVRARQQWILRQMRQLGGEGFMAQHKLR</sequence>
<protein>
    <recommendedName>
        <fullName evidence="1">Biosynthetic peptidoglycan transglycosylase</fullName>
        <ecNumber evidence="1">2.4.99.28</ecNumber>
    </recommendedName>
    <alternativeName>
        <fullName evidence="1">Glycan polymerase</fullName>
    </alternativeName>
    <alternativeName>
        <fullName evidence="1">Peptidoglycan glycosyltransferase MtgA</fullName>
        <shortName evidence="1">PGT</shortName>
    </alternativeName>
</protein>
<feature type="chain" id="PRO_1000017305" description="Biosynthetic peptidoglycan transglycosylase">
    <location>
        <begin position="1"/>
        <end position="241"/>
    </location>
</feature>
<feature type="transmembrane region" description="Helical" evidence="1">
    <location>
        <begin position="19"/>
        <end position="39"/>
    </location>
</feature>
<reference key="1">
    <citation type="journal article" date="2010" name="PLoS ONE">
        <title>Genome sequence of Cronobacter sakazakii BAA-894 and comparative genomic hybridization analysis with other Cronobacter species.</title>
        <authorList>
            <person name="Kucerova E."/>
            <person name="Clifton S.W."/>
            <person name="Xia X.Q."/>
            <person name="Long F."/>
            <person name="Porwollik S."/>
            <person name="Fulton L."/>
            <person name="Fronick C."/>
            <person name="Minx P."/>
            <person name="Kyung K."/>
            <person name="Warren W."/>
            <person name="Fulton R."/>
            <person name="Feng D."/>
            <person name="Wollam A."/>
            <person name="Shah N."/>
            <person name="Bhonagiri V."/>
            <person name="Nash W.E."/>
            <person name="Hallsworth-Pepin K."/>
            <person name="Wilson R.K."/>
            <person name="McClelland M."/>
            <person name="Forsythe S.J."/>
        </authorList>
    </citation>
    <scope>NUCLEOTIDE SEQUENCE [LARGE SCALE GENOMIC DNA]</scope>
    <source>
        <strain>ATCC BAA-894</strain>
    </source>
</reference>
<comment type="function">
    <text evidence="1">Peptidoglycan polymerase that catalyzes glycan chain elongation from lipid-linked precursors.</text>
</comment>
<comment type="catalytic activity">
    <reaction evidence="1">
        <text>[GlcNAc-(1-&gt;4)-Mur2Ac(oyl-L-Ala-gamma-D-Glu-L-Lys-D-Ala-D-Ala)](n)-di-trans,octa-cis-undecaprenyl diphosphate + beta-D-GlcNAc-(1-&gt;4)-Mur2Ac(oyl-L-Ala-gamma-D-Glu-L-Lys-D-Ala-D-Ala)-di-trans,octa-cis-undecaprenyl diphosphate = [GlcNAc-(1-&gt;4)-Mur2Ac(oyl-L-Ala-gamma-D-Glu-L-Lys-D-Ala-D-Ala)](n+1)-di-trans,octa-cis-undecaprenyl diphosphate + di-trans,octa-cis-undecaprenyl diphosphate + H(+)</text>
        <dbReference type="Rhea" id="RHEA:23708"/>
        <dbReference type="Rhea" id="RHEA-COMP:9602"/>
        <dbReference type="Rhea" id="RHEA-COMP:9603"/>
        <dbReference type="ChEBI" id="CHEBI:15378"/>
        <dbReference type="ChEBI" id="CHEBI:58405"/>
        <dbReference type="ChEBI" id="CHEBI:60033"/>
        <dbReference type="ChEBI" id="CHEBI:78435"/>
        <dbReference type="EC" id="2.4.99.28"/>
    </reaction>
</comment>
<comment type="pathway">
    <text evidence="1">Cell wall biogenesis; peptidoglycan biosynthesis.</text>
</comment>
<comment type="subcellular location">
    <subcellularLocation>
        <location evidence="1">Cell inner membrane</location>
        <topology evidence="1">Single-pass membrane protein</topology>
    </subcellularLocation>
</comment>
<comment type="similarity">
    <text evidence="1">Belongs to the glycosyltransferase 51 family.</text>
</comment>
<accession>A7MJD8</accession>
<proteinExistence type="inferred from homology"/>
<keyword id="KW-0997">Cell inner membrane</keyword>
<keyword id="KW-1003">Cell membrane</keyword>
<keyword id="KW-0133">Cell shape</keyword>
<keyword id="KW-0961">Cell wall biogenesis/degradation</keyword>
<keyword id="KW-0328">Glycosyltransferase</keyword>
<keyword id="KW-0472">Membrane</keyword>
<keyword id="KW-0573">Peptidoglycan synthesis</keyword>
<keyword id="KW-1185">Reference proteome</keyword>
<keyword id="KW-0808">Transferase</keyword>
<keyword id="KW-0812">Transmembrane</keyword>
<keyword id="KW-1133">Transmembrane helix</keyword>
<evidence type="ECO:0000255" key="1">
    <source>
        <dbReference type="HAMAP-Rule" id="MF_00766"/>
    </source>
</evidence>